<sequence>MDPPAGAARRLLCPALLLLLLPPPPLLLLPPPPASVRLVAATEPPGGPPGQGAERILAVPVRTDAQGRLVSHVVSLETAGAGVRARRAALDQTSGLPGGAAQDPGGRLFYNLTVFGRDLHLRLRPNARLVAPGATVEWQGETGDTRVEPLLGSCLYVGDVADLPKASSVALSNCDGLAGLIRMEEEEFFIEPLEKGQTDQEAEQGRVHVVYRRPPTPKPPPVSEPQALDTGVSQGNLDSLSRALGVLEERINSSRRRVRRHATDDDYNIEVLLGVDDSVVQFHGKEHVQKYLLTLMNIVNEIYHDESLGAHINVVLVRIILLSHAKSMSLIEIGNPSQSLENVCRWAYLQQKPDTDHDEYHDHAIFLTRQDFGPSGMQGYAPVTGMCHPVRSCTLNHEDGFSSAFVVAHETGHVLGMEHDGQGNRCGDEVRLGSIMAPLVQAAFHRFHWSRCSQQELSRYLHSYDCLRDDPFAHDWPALPQLPGLHYSMNEQCRFDFGLGYMMCTAFRTFDPCKQLWCSHPDNPYFCKTKKGPPLDGTMCAPGKHCFKGHCIWLTPDILKRDGNWGAWTPFGSCSRTCGTGVKFRTRQCDNPHPANGGRTCSGLAYDFQLCNPQDCPNSLADFREEQCQQWDLYFEHGDVQHHWLPHEHRDAKERCHLYCESKETGEVVSMKRMVHDGTRCSYKDAFSLCVRGDCRKVGCDGVIGSRKQEDKCGVCGGDNTHCKVVKGTFTRSPRKQDYIKMFEIPAGARHLLIQEADTTSHHLSVKNLETGKFILNEENHLDPNSRSFIAMGVEWEYRNEDERETLQTIGPLHGTITVLVIPEGDTRISLTYKYMIHEDSLNVDDNNVLEDDAVRHEWALKKWSPCSKPCGGGSQFTKYGCRRRLDSKMVHRAFCSALAKPKAIRRACNPQECSQPVWVTGEWEPCTQSCGRTGMQVRSVRCIQPLHNNTTRSVHTKHCNDHRPESRRACNRELCPGRWRAGSWSQCSVTCGNGTQERPVLCRTADDNFGVCREERPETARICRLAPCPRNGSDPSKKSYVVQWLSRPDPDSPIQKISSKDQCQGDKSMFCRMEVLSRYCSIPSYNKLCCKSCNPPRNLSNTEDGGVEPPPGKHNDIDVFMPTLPGPTVATQVQPSPGPPLEAPLNVSSTNATEDHPETNAVDVPYKIHGVDEEVPSPNLIPRRPSLYVKTRNQRIQELINAVQRKEKPGKF</sequence>
<proteinExistence type="evidence at protein level"/>
<keyword id="KW-0177">Collagen degradation</keyword>
<keyword id="KW-0903">Direct protein sequencing</keyword>
<keyword id="KW-1015">Disulfide bond</keyword>
<keyword id="KW-0272">Extracellular matrix</keyword>
<keyword id="KW-0325">Glycoprotein</keyword>
<keyword id="KW-0378">Hydrolase</keyword>
<keyword id="KW-0479">Metal-binding</keyword>
<keyword id="KW-0482">Metalloprotease</keyword>
<keyword id="KW-0645">Protease</keyword>
<keyword id="KW-1185">Reference proteome</keyword>
<keyword id="KW-0677">Repeat</keyword>
<keyword id="KW-0964">Secreted</keyword>
<keyword id="KW-0732">Signal</keyword>
<keyword id="KW-0862">Zinc</keyword>
<keyword id="KW-0865">Zymogen</keyword>
<comment type="function">
    <text evidence="2 3">Cleaves the propeptides of type I and II collagen prior to fibril assembly (By similarity). Does not act on type III collagen (By similarity). Cleaves lysyl oxidase LOX at a site downstream of its propeptide cleavage site to produce a short LOX form with reduced collagen-binding activity (By similarity).</text>
</comment>
<comment type="catalytic activity">
    <reaction>
        <text>Cleaves the N-propeptide of collagen chain alpha1(I) at Pro-|-Gln and of alpha1(II) and alpha2(I) at Ala-|-Gln.</text>
        <dbReference type="EC" id="3.4.24.14"/>
    </reaction>
</comment>
<comment type="cofactor">
    <cofactor evidence="1">
        <name>Zn(2+)</name>
        <dbReference type="ChEBI" id="CHEBI:29105"/>
    </cofactor>
    <text evidence="1">Binds 1 zinc ion per subunit.</text>
</comment>
<comment type="subunit">
    <text evidence="1">May belong to a multimeric complex. Binds specifically to collagen type XIV (By similarity).</text>
</comment>
<comment type="subcellular location">
    <subcellularLocation>
        <location evidence="1">Secreted</location>
        <location evidence="1">Extracellular space</location>
        <location evidence="1">Extracellular matrix</location>
    </subcellularLocation>
</comment>
<comment type="domain">
    <text>The spacer domain and the TSP type-1 domains are important for a tight interaction with the extracellular matrix.</text>
</comment>
<comment type="PTM">
    <text evidence="1">The precursor is cleaved by a furin endopeptidase.</text>
</comment>
<comment type="PTM">
    <text evidence="1">Glycosylated. Can be O-fucosylated by POFUT2 on a serine or a threonine residue found within the consensus sequence C1-X(2)-(S/T)-C2-G of the TSP type-1 repeat domains where C1 and C2 are the first and second cysteine residue of the repeat, respectively. Fucosylated repeats can then be further glycosylated by the addition of a beta-1,3-glucose residue by the glucosyltransferase, B3GALTL. Fucosylation mediates the efficient secretion of ADAMTS family members. Can also be C-glycosylated with one or two mannose molecules on tryptophan residues within the consensus sequence W-X-X-W of the TPRs, and N-glycosylated. These other glycosylations can also facilitate secretion (By similarity).</text>
</comment>
<feature type="signal peptide" evidence="4">
    <location>
        <begin position="1"/>
        <end position="28"/>
    </location>
</feature>
<feature type="propeptide" id="PRO_0000029161" evidence="1">
    <location>
        <begin position="29"/>
        <end position="260"/>
    </location>
</feature>
<feature type="chain" id="PRO_0000029160" description="A disintegrin and metalloproteinase with thrombospondin motifs 2">
    <location>
        <begin position="261"/>
        <end position="1213"/>
    </location>
</feature>
<feature type="domain" description="Peptidase M12B" evidence="7">
    <location>
        <begin position="267"/>
        <end position="471"/>
    </location>
</feature>
<feature type="domain" description="Disintegrin">
    <location>
        <begin position="480"/>
        <end position="560"/>
    </location>
</feature>
<feature type="domain" description="TSP type-1 1" evidence="5">
    <location>
        <begin position="561"/>
        <end position="617"/>
    </location>
</feature>
<feature type="domain" description="TSP type-1 2" evidence="5">
    <location>
        <begin position="855"/>
        <end position="913"/>
    </location>
</feature>
<feature type="domain" description="TSP type-1 3" evidence="5">
    <location>
        <begin position="915"/>
        <end position="975"/>
    </location>
</feature>
<feature type="domain" description="TSP type-1 4" evidence="5">
    <location>
        <begin position="976"/>
        <end position="1030"/>
    </location>
</feature>
<feature type="domain" description="PLAC" evidence="6">
    <location>
        <begin position="1060"/>
        <end position="1098"/>
    </location>
</feature>
<feature type="region of interest" description="Disordered" evidence="8">
    <location>
        <begin position="211"/>
        <end position="232"/>
    </location>
</feature>
<feature type="region of interest" description="Spacer">
    <location>
        <begin position="723"/>
        <end position="851"/>
    </location>
</feature>
<feature type="short sequence motif" description="Cell attachment site" evidence="4">
    <location>
        <begin position="692"/>
        <end position="694"/>
    </location>
</feature>
<feature type="compositionally biased region" description="Pro residues" evidence="8">
    <location>
        <begin position="214"/>
        <end position="223"/>
    </location>
</feature>
<feature type="active site" evidence="7">
    <location>
        <position position="410"/>
    </location>
</feature>
<feature type="binding site" evidence="7">
    <location>
        <position position="409"/>
    </location>
    <ligand>
        <name>Zn(2+)</name>
        <dbReference type="ChEBI" id="CHEBI:29105"/>
        <note>catalytic</note>
    </ligand>
</feature>
<feature type="binding site" evidence="7">
    <location>
        <position position="413"/>
    </location>
    <ligand>
        <name>Zn(2+)</name>
        <dbReference type="ChEBI" id="CHEBI:29105"/>
        <note>catalytic</note>
    </ligand>
</feature>
<feature type="binding site" evidence="7">
    <location>
        <position position="419"/>
    </location>
    <ligand>
        <name>Zn(2+)</name>
        <dbReference type="ChEBI" id="CHEBI:29105"/>
        <note>catalytic</note>
    </ligand>
</feature>
<feature type="glycosylation site" description="N-linked (GlcNAc...) asparagine" evidence="4">
    <location>
        <position position="111"/>
    </location>
</feature>
<feature type="glycosylation site" description="N-linked (GlcNAc...) asparagine" evidence="4">
    <location>
        <position position="252"/>
    </location>
</feature>
<feature type="glycosylation site" description="N-linked (GlcNAc...) asparagine" evidence="4">
    <location>
        <position position="949"/>
    </location>
</feature>
<feature type="glycosylation site" description="N-linked (GlcNAc...) asparagine" evidence="4">
    <location>
        <position position="950"/>
    </location>
</feature>
<feature type="glycosylation site" description="N-linked (GlcNAc...) asparagine" evidence="4">
    <location>
        <position position="994"/>
    </location>
</feature>
<feature type="glycosylation site" description="N-linked (GlcNAc...) asparagine" evidence="4">
    <location>
        <position position="1032"/>
    </location>
</feature>
<feature type="glycosylation site" description="N-linked (GlcNAc...) asparagine" evidence="4">
    <location>
        <position position="1099"/>
    </location>
</feature>
<feature type="glycosylation site" description="N-linked (GlcNAc...) asparagine" evidence="4">
    <location>
        <position position="1147"/>
    </location>
</feature>
<feature type="glycosylation site" description="N-linked (GlcNAc...) asparagine" evidence="4">
    <location>
        <position position="1152"/>
    </location>
</feature>
<feature type="disulfide bond" evidence="1">
    <location>
        <begin position="344"/>
        <end position="393"/>
    </location>
</feature>
<feature type="disulfide bond" evidence="1">
    <location>
        <begin position="387"/>
        <end position="466"/>
    </location>
</feature>
<feature type="disulfide bond" evidence="1">
    <location>
        <begin position="426"/>
        <end position="452"/>
    </location>
</feature>
<feature type="disulfide bond" evidence="1">
    <location>
        <begin position="493"/>
        <end position="518"/>
    </location>
</feature>
<feature type="disulfide bond" evidence="1">
    <location>
        <begin position="504"/>
        <end position="527"/>
    </location>
</feature>
<feature type="disulfide bond" evidence="1">
    <location>
        <begin position="513"/>
        <end position="546"/>
    </location>
</feature>
<feature type="disulfide bond" evidence="1">
    <location>
        <begin position="540"/>
        <end position="551"/>
    </location>
</feature>
<feature type="disulfide bond" evidence="1">
    <location>
        <begin position="574"/>
        <end position="611"/>
    </location>
</feature>
<feature type="disulfide bond" evidence="1">
    <location>
        <begin position="578"/>
        <end position="616"/>
    </location>
</feature>
<feature type="disulfide bond" evidence="1">
    <location>
        <begin position="589"/>
        <end position="601"/>
    </location>
</feature>
<feature type="disulfide bond" evidence="1">
    <location>
        <begin position="988"/>
        <end position="1024"/>
    </location>
</feature>
<feature type="disulfide bond" evidence="1">
    <location>
        <begin position="992"/>
        <end position="1029"/>
    </location>
</feature>
<feature type="disulfide bond" evidence="1">
    <location>
        <begin position="1003"/>
        <end position="1013"/>
    </location>
</feature>
<accession>Q8C9W3</accession>
<evidence type="ECO:0000250" key="1"/>
<evidence type="ECO:0000250" key="2">
    <source>
        <dbReference type="UniProtKB" id="O95450"/>
    </source>
</evidence>
<evidence type="ECO:0000250" key="3">
    <source>
        <dbReference type="UniProtKB" id="P79331"/>
    </source>
</evidence>
<evidence type="ECO:0000255" key="4"/>
<evidence type="ECO:0000255" key="5">
    <source>
        <dbReference type="PROSITE-ProRule" id="PRU00210"/>
    </source>
</evidence>
<evidence type="ECO:0000255" key="6">
    <source>
        <dbReference type="PROSITE-ProRule" id="PRU00233"/>
    </source>
</evidence>
<evidence type="ECO:0000255" key="7">
    <source>
        <dbReference type="PROSITE-ProRule" id="PRU00276"/>
    </source>
</evidence>
<evidence type="ECO:0000256" key="8">
    <source>
        <dbReference type="SAM" id="MobiDB-lite"/>
    </source>
</evidence>
<protein>
    <recommendedName>
        <fullName>A disintegrin and metalloproteinase with thrombospondin motifs 2</fullName>
        <shortName>ADAM-TS 2</shortName>
        <shortName>ADAM-TS2</shortName>
        <shortName>ADAMTS-2</shortName>
        <ecNumber>3.4.24.14</ecNumber>
    </recommendedName>
    <alternativeName>
        <fullName>Procollagen I N-proteinase</fullName>
        <shortName>PC I-NP</shortName>
    </alternativeName>
    <alternativeName>
        <fullName>Procollagen I/II amino propeptide-processing enzyme</fullName>
    </alternativeName>
    <alternativeName>
        <fullName>Procollagen N-endopeptidase</fullName>
        <shortName>pNPI</shortName>
    </alternativeName>
</protein>
<dbReference type="EC" id="3.4.24.14"/>
<dbReference type="EMBL" id="AK040370">
    <property type="protein sequence ID" value="BAC30572.1"/>
    <property type="molecule type" value="mRNA"/>
</dbReference>
<dbReference type="EMBL" id="BC046456">
    <property type="protein sequence ID" value="AAH46456.1"/>
    <property type="molecule type" value="mRNA"/>
</dbReference>
<dbReference type="CCDS" id="CCDS24636.1"/>
<dbReference type="RefSeq" id="NP_783574.1">
    <property type="nucleotide sequence ID" value="NM_175643.3"/>
</dbReference>
<dbReference type="SMR" id="Q8C9W3"/>
<dbReference type="BioGRID" id="229775">
    <property type="interactions" value="3"/>
</dbReference>
<dbReference type="FunCoup" id="Q8C9W3">
    <property type="interactions" value="84"/>
</dbReference>
<dbReference type="STRING" id="10090.ENSMUSP00000040171"/>
<dbReference type="MEROPS" id="M12.301"/>
<dbReference type="GlyCosmos" id="Q8C9W3">
    <property type="glycosylation" value="9 sites, No reported glycans"/>
</dbReference>
<dbReference type="GlyGen" id="Q8C9W3">
    <property type="glycosylation" value="10 sites, 3 N-linked glycans (4 sites)"/>
</dbReference>
<dbReference type="iPTMnet" id="Q8C9W3"/>
<dbReference type="PhosphoSitePlus" id="Q8C9W3"/>
<dbReference type="CPTAC" id="non-CPTAC-3691"/>
<dbReference type="jPOST" id="Q8C9W3"/>
<dbReference type="PaxDb" id="10090-ENSMUSP00000040171"/>
<dbReference type="ProteomicsDB" id="277201"/>
<dbReference type="Antibodypedia" id="17642">
    <property type="antibodies" value="170 antibodies from 28 providers"/>
</dbReference>
<dbReference type="DNASU" id="216725"/>
<dbReference type="Ensembl" id="ENSMUST00000040523.9">
    <property type="protein sequence ID" value="ENSMUSP00000040171.9"/>
    <property type="gene ID" value="ENSMUSG00000036545.10"/>
</dbReference>
<dbReference type="GeneID" id="216725"/>
<dbReference type="KEGG" id="mmu:216725"/>
<dbReference type="UCSC" id="uc007iso.2">
    <property type="organism name" value="mouse"/>
</dbReference>
<dbReference type="AGR" id="MGI:1347356"/>
<dbReference type="CTD" id="9509"/>
<dbReference type="MGI" id="MGI:1347356">
    <property type="gene designation" value="Adamts2"/>
</dbReference>
<dbReference type="VEuPathDB" id="HostDB:ENSMUSG00000036545"/>
<dbReference type="eggNOG" id="KOG3538">
    <property type="taxonomic scope" value="Eukaryota"/>
</dbReference>
<dbReference type="GeneTree" id="ENSGT00940000156647"/>
<dbReference type="HOGENOM" id="CLU_000660_4_1_1"/>
<dbReference type="InParanoid" id="Q8C9W3"/>
<dbReference type="OMA" id="QCQGDKS"/>
<dbReference type="OrthoDB" id="5855429at2759"/>
<dbReference type="PhylomeDB" id="Q8C9W3"/>
<dbReference type="TreeFam" id="TF313537"/>
<dbReference type="BRENDA" id="3.4.24.14">
    <property type="organism ID" value="3474"/>
</dbReference>
<dbReference type="Reactome" id="R-MMU-1650814">
    <property type="pathway name" value="Collagen biosynthesis and modifying enzymes"/>
</dbReference>
<dbReference type="Reactome" id="R-MMU-5173214">
    <property type="pathway name" value="O-glycosylation of TSR domain-containing proteins"/>
</dbReference>
<dbReference type="BioGRID-ORCS" id="216725">
    <property type="hits" value="4 hits in 79 CRISPR screens"/>
</dbReference>
<dbReference type="ChiTaRS" id="Adamts2">
    <property type="organism name" value="mouse"/>
</dbReference>
<dbReference type="PRO" id="PR:Q8C9W3"/>
<dbReference type="Proteomes" id="UP000000589">
    <property type="component" value="Chromosome 11"/>
</dbReference>
<dbReference type="RNAct" id="Q8C9W3">
    <property type="molecule type" value="protein"/>
</dbReference>
<dbReference type="Bgee" id="ENSMUSG00000036545">
    <property type="expression patterns" value="Expressed in ascending aorta and 188 other cell types or tissues"/>
</dbReference>
<dbReference type="ExpressionAtlas" id="Q8C9W3">
    <property type="expression patterns" value="baseline and differential"/>
</dbReference>
<dbReference type="GO" id="GO:0031012">
    <property type="term" value="C:extracellular matrix"/>
    <property type="evidence" value="ECO:0000314"/>
    <property type="project" value="MGI"/>
</dbReference>
<dbReference type="GO" id="GO:0005576">
    <property type="term" value="C:extracellular region"/>
    <property type="evidence" value="ECO:0007669"/>
    <property type="project" value="UniProtKB-KW"/>
</dbReference>
<dbReference type="GO" id="GO:0004222">
    <property type="term" value="F:metalloendopeptidase activity"/>
    <property type="evidence" value="ECO:0007669"/>
    <property type="project" value="UniProtKB-EC"/>
</dbReference>
<dbReference type="GO" id="GO:0008233">
    <property type="term" value="F:peptidase activity"/>
    <property type="evidence" value="ECO:0000314"/>
    <property type="project" value="MGI"/>
</dbReference>
<dbReference type="GO" id="GO:0008270">
    <property type="term" value="F:zinc ion binding"/>
    <property type="evidence" value="ECO:0007669"/>
    <property type="project" value="InterPro"/>
</dbReference>
<dbReference type="GO" id="GO:0030574">
    <property type="term" value="P:collagen catabolic process"/>
    <property type="evidence" value="ECO:0007669"/>
    <property type="project" value="UniProtKB-KW"/>
</dbReference>
<dbReference type="GO" id="GO:0030199">
    <property type="term" value="P:collagen fibril organization"/>
    <property type="evidence" value="ECO:0000315"/>
    <property type="project" value="MGI"/>
</dbReference>
<dbReference type="GO" id="GO:0030324">
    <property type="term" value="P:lung development"/>
    <property type="evidence" value="ECO:0000315"/>
    <property type="project" value="MGI"/>
</dbReference>
<dbReference type="GO" id="GO:0016485">
    <property type="term" value="P:protein processing"/>
    <property type="evidence" value="ECO:0000315"/>
    <property type="project" value="MGI"/>
</dbReference>
<dbReference type="GO" id="GO:0043588">
    <property type="term" value="P:skin development"/>
    <property type="evidence" value="ECO:0000315"/>
    <property type="project" value="MGI"/>
</dbReference>
<dbReference type="GO" id="GO:0007283">
    <property type="term" value="P:spermatogenesis"/>
    <property type="evidence" value="ECO:0000315"/>
    <property type="project" value="MGI"/>
</dbReference>
<dbReference type="CDD" id="cd04273">
    <property type="entry name" value="ZnMc_ADAMTS_like"/>
    <property type="match status" value="1"/>
</dbReference>
<dbReference type="FunFam" id="2.20.100.10:FF:000006">
    <property type="entry name" value="A disintegrin and metalloproteinase with thrombospondin motifs 1"/>
    <property type="match status" value="1"/>
</dbReference>
<dbReference type="FunFam" id="2.60.120.830:FF:000001">
    <property type="entry name" value="A disintegrin and metalloproteinase with thrombospondin motifs 1"/>
    <property type="match status" value="1"/>
</dbReference>
<dbReference type="FunFam" id="2.20.100.10:FF:000011">
    <property type="entry name" value="A disintegrin and metalloproteinase with thrombospondin motifs 3"/>
    <property type="match status" value="1"/>
</dbReference>
<dbReference type="FunFam" id="2.20.100.10:FF:000030">
    <property type="entry name" value="A disintegrin and metalloproteinase with thrombospondin motifs 3"/>
    <property type="match status" value="1"/>
</dbReference>
<dbReference type="FunFam" id="3.40.1620.60:FF:000001">
    <property type="entry name" value="A disintegrin and metalloproteinase with thrombospondin motifs 3"/>
    <property type="match status" value="1"/>
</dbReference>
<dbReference type="FunFam" id="3.40.390.10:FF:000008">
    <property type="entry name" value="A disintegrin and metalloproteinase with thrombospondin motifs 3"/>
    <property type="match status" value="1"/>
</dbReference>
<dbReference type="Gene3D" id="2.60.120.830">
    <property type="match status" value="1"/>
</dbReference>
<dbReference type="Gene3D" id="3.40.1620.60">
    <property type="match status" value="1"/>
</dbReference>
<dbReference type="Gene3D" id="3.40.390.10">
    <property type="entry name" value="Collagenase (Catalytic Domain)"/>
    <property type="match status" value="1"/>
</dbReference>
<dbReference type="Gene3D" id="2.20.100.10">
    <property type="entry name" value="Thrombospondin type-1 (TSP1) repeat"/>
    <property type="match status" value="4"/>
</dbReference>
<dbReference type="InterPro" id="IPR013273">
    <property type="entry name" value="ADAMTS/ADAMTS-like"/>
</dbReference>
<dbReference type="InterPro" id="IPR050439">
    <property type="entry name" value="ADAMTS_ADAMTS-like"/>
</dbReference>
<dbReference type="InterPro" id="IPR041645">
    <property type="entry name" value="ADAMTS_CR_2"/>
</dbReference>
<dbReference type="InterPro" id="IPR045371">
    <property type="entry name" value="ADAMTS_CR_3"/>
</dbReference>
<dbReference type="InterPro" id="IPR010294">
    <property type="entry name" value="ADAMTS_spacer1"/>
</dbReference>
<dbReference type="InterPro" id="IPR024079">
    <property type="entry name" value="MetalloPept_cat_dom_sf"/>
</dbReference>
<dbReference type="InterPro" id="IPR013275">
    <property type="entry name" value="Pept_M12B_ADAM-TS2"/>
</dbReference>
<dbReference type="InterPro" id="IPR001590">
    <property type="entry name" value="Peptidase_M12B"/>
</dbReference>
<dbReference type="InterPro" id="IPR002870">
    <property type="entry name" value="Peptidase_M12B_N"/>
</dbReference>
<dbReference type="InterPro" id="IPR010909">
    <property type="entry name" value="PLAC"/>
</dbReference>
<dbReference type="InterPro" id="IPR000884">
    <property type="entry name" value="TSP1_rpt"/>
</dbReference>
<dbReference type="InterPro" id="IPR036383">
    <property type="entry name" value="TSP1_rpt_sf"/>
</dbReference>
<dbReference type="PANTHER" id="PTHR13723:SF141">
    <property type="entry name" value="A DISINTEGRIN AND METALLOPROTEINASE WITH THROMBOSPONDIN MOTIFS 2"/>
    <property type="match status" value="1"/>
</dbReference>
<dbReference type="PANTHER" id="PTHR13723">
    <property type="entry name" value="ADAMTS A DISINTEGRIN AND METALLOPROTEASE WITH THROMBOSPONDIN MOTIFS PROTEASE"/>
    <property type="match status" value="1"/>
</dbReference>
<dbReference type="Pfam" id="PF17771">
    <property type="entry name" value="ADAMTS_CR_2"/>
    <property type="match status" value="1"/>
</dbReference>
<dbReference type="Pfam" id="PF19236">
    <property type="entry name" value="ADAMTS_CR_3"/>
    <property type="match status" value="1"/>
</dbReference>
<dbReference type="Pfam" id="PF05986">
    <property type="entry name" value="ADAMTS_spacer1"/>
    <property type="match status" value="1"/>
</dbReference>
<dbReference type="Pfam" id="PF01562">
    <property type="entry name" value="Pep_M12B_propep"/>
    <property type="match status" value="1"/>
</dbReference>
<dbReference type="Pfam" id="PF01421">
    <property type="entry name" value="Reprolysin"/>
    <property type="match status" value="1"/>
</dbReference>
<dbReference type="Pfam" id="PF19030">
    <property type="entry name" value="TSP1_ADAMTS"/>
    <property type="match status" value="3"/>
</dbReference>
<dbReference type="Pfam" id="PF00090">
    <property type="entry name" value="TSP_1"/>
    <property type="match status" value="1"/>
</dbReference>
<dbReference type="PRINTS" id="PR01859">
    <property type="entry name" value="ADAMTS2"/>
</dbReference>
<dbReference type="PRINTS" id="PR01857">
    <property type="entry name" value="ADAMTSFAMILY"/>
</dbReference>
<dbReference type="SMART" id="SM00209">
    <property type="entry name" value="TSP1"/>
    <property type="match status" value="4"/>
</dbReference>
<dbReference type="SUPFAM" id="SSF55486">
    <property type="entry name" value="Metalloproteases ('zincins'), catalytic domain"/>
    <property type="match status" value="1"/>
</dbReference>
<dbReference type="SUPFAM" id="SSF82895">
    <property type="entry name" value="TSP-1 type 1 repeat"/>
    <property type="match status" value="4"/>
</dbReference>
<dbReference type="PROSITE" id="PS50215">
    <property type="entry name" value="ADAM_MEPRO"/>
    <property type="match status" value="1"/>
</dbReference>
<dbReference type="PROSITE" id="PS50900">
    <property type="entry name" value="PLAC"/>
    <property type="match status" value="1"/>
</dbReference>
<dbReference type="PROSITE" id="PS50092">
    <property type="entry name" value="TSP1"/>
    <property type="match status" value="4"/>
</dbReference>
<name>ATS2_MOUSE</name>
<organism>
    <name type="scientific">Mus musculus</name>
    <name type="common">Mouse</name>
    <dbReference type="NCBI Taxonomy" id="10090"/>
    <lineage>
        <taxon>Eukaryota</taxon>
        <taxon>Metazoa</taxon>
        <taxon>Chordata</taxon>
        <taxon>Craniata</taxon>
        <taxon>Vertebrata</taxon>
        <taxon>Euteleostomi</taxon>
        <taxon>Mammalia</taxon>
        <taxon>Eutheria</taxon>
        <taxon>Euarchontoglires</taxon>
        <taxon>Glires</taxon>
        <taxon>Rodentia</taxon>
        <taxon>Myomorpha</taxon>
        <taxon>Muroidea</taxon>
        <taxon>Muridae</taxon>
        <taxon>Murinae</taxon>
        <taxon>Mus</taxon>
        <taxon>Mus</taxon>
    </lineage>
</organism>
<gene>
    <name type="primary">Adamts2</name>
</gene>
<reference key="1">
    <citation type="journal article" date="2005" name="Science">
        <title>The transcriptional landscape of the mammalian genome.</title>
        <authorList>
            <person name="Carninci P."/>
            <person name="Kasukawa T."/>
            <person name="Katayama S."/>
            <person name="Gough J."/>
            <person name="Frith M.C."/>
            <person name="Maeda N."/>
            <person name="Oyama R."/>
            <person name="Ravasi T."/>
            <person name="Lenhard B."/>
            <person name="Wells C."/>
            <person name="Kodzius R."/>
            <person name="Shimokawa K."/>
            <person name="Bajic V.B."/>
            <person name="Brenner S.E."/>
            <person name="Batalov S."/>
            <person name="Forrest A.R."/>
            <person name="Zavolan M."/>
            <person name="Davis M.J."/>
            <person name="Wilming L.G."/>
            <person name="Aidinis V."/>
            <person name="Allen J.E."/>
            <person name="Ambesi-Impiombato A."/>
            <person name="Apweiler R."/>
            <person name="Aturaliya R.N."/>
            <person name="Bailey T.L."/>
            <person name="Bansal M."/>
            <person name="Baxter L."/>
            <person name="Beisel K.W."/>
            <person name="Bersano T."/>
            <person name="Bono H."/>
            <person name="Chalk A.M."/>
            <person name="Chiu K.P."/>
            <person name="Choudhary V."/>
            <person name="Christoffels A."/>
            <person name="Clutterbuck D.R."/>
            <person name="Crowe M.L."/>
            <person name="Dalla E."/>
            <person name="Dalrymple B.P."/>
            <person name="de Bono B."/>
            <person name="Della Gatta G."/>
            <person name="di Bernardo D."/>
            <person name="Down T."/>
            <person name="Engstrom P."/>
            <person name="Fagiolini M."/>
            <person name="Faulkner G."/>
            <person name="Fletcher C.F."/>
            <person name="Fukushima T."/>
            <person name="Furuno M."/>
            <person name="Futaki S."/>
            <person name="Gariboldi M."/>
            <person name="Georgii-Hemming P."/>
            <person name="Gingeras T.R."/>
            <person name="Gojobori T."/>
            <person name="Green R.E."/>
            <person name="Gustincich S."/>
            <person name="Harbers M."/>
            <person name="Hayashi Y."/>
            <person name="Hensch T.K."/>
            <person name="Hirokawa N."/>
            <person name="Hill D."/>
            <person name="Huminiecki L."/>
            <person name="Iacono M."/>
            <person name="Ikeo K."/>
            <person name="Iwama A."/>
            <person name="Ishikawa T."/>
            <person name="Jakt M."/>
            <person name="Kanapin A."/>
            <person name="Katoh M."/>
            <person name="Kawasawa Y."/>
            <person name="Kelso J."/>
            <person name="Kitamura H."/>
            <person name="Kitano H."/>
            <person name="Kollias G."/>
            <person name="Krishnan S.P."/>
            <person name="Kruger A."/>
            <person name="Kummerfeld S.K."/>
            <person name="Kurochkin I.V."/>
            <person name="Lareau L.F."/>
            <person name="Lazarevic D."/>
            <person name="Lipovich L."/>
            <person name="Liu J."/>
            <person name="Liuni S."/>
            <person name="McWilliam S."/>
            <person name="Madan Babu M."/>
            <person name="Madera M."/>
            <person name="Marchionni L."/>
            <person name="Matsuda H."/>
            <person name="Matsuzawa S."/>
            <person name="Miki H."/>
            <person name="Mignone F."/>
            <person name="Miyake S."/>
            <person name="Morris K."/>
            <person name="Mottagui-Tabar S."/>
            <person name="Mulder N."/>
            <person name="Nakano N."/>
            <person name="Nakauchi H."/>
            <person name="Ng P."/>
            <person name="Nilsson R."/>
            <person name="Nishiguchi S."/>
            <person name="Nishikawa S."/>
            <person name="Nori F."/>
            <person name="Ohara O."/>
            <person name="Okazaki Y."/>
            <person name="Orlando V."/>
            <person name="Pang K.C."/>
            <person name="Pavan W.J."/>
            <person name="Pavesi G."/>
            <person name="Pesole G."/>
            <person name="Petrovsky N."/>
            <person name="Piazza S."/>
            <person name="Reed J."/>
            <person name="Reid J.F."/>
            <person name="Ring B.Z."/>
            <person name="Ringwald M."/>
            <person name="Rost B."/>
            <person name="Ruan Y."/>
            <person name="Salzberg S.L."/>
            <person name="Sandelin A."/>
            <person name="Schneider C."/>
            <person name="Schoenbach C."/>
            <person name="Sekiguchi K."/>
            <person name="Semple C.A."/>
            <person name="Seno S."/>
            <person name="Sessa L."/>
            <person name="Sheng Y."/>
            <person name="Shibata Y."/>
            <person name="Shimada H."/>
            <person name="Shimada K."/>
            <person name="Silva D."/>
            <person name="Sinclair B."/>
            <person name="Sperling S."/>
            <person name="Stupka E."/>
            <person name="Sugiura K."/>
            <person name="Sultana R."/>
            <person name="Takenaka Y."/>
            <person name="Taki K."/>
            <person name="Tammoja K."/>
            <person name="Tan S.L."/>
            <person name="Tang S."/>
            <person name="Taylor M.S."/>
            <person name="Tegner J."/>
            <person name="Teichmann S.A."/>
            <person name="Ueda H.R."/>
            <person name="van Nimwegen E."/>
            <person name="Verardo R."/>
            <person name="Wei C.L."/>
            <person name="Yagi K."/>
            <person name="Yamanishi H."/>
            <person name="Zabarovsky E."/>
            <person name="Zhu S."/>
            <person name="Zimmer A."/>
            <person name="Hide W."/>
            <person name="Bult C."/>
            <person name="Grimmond S.M."/>
            <person name="Teasdale R.D."/>
            <person name="Liu E.T."/>
            <person name="Brusic V."/>
            <person name="Quackenbush J."/>
            <person name="Wahlestedt C."/>
            <person name="Mattick J.S."/>
            <person name="Hume D.A."/>
            <person name="Kai C."/>
            <person name="Sasaki D."/>
            <person name="Tomaru Y."/>
            <person name="Fukuda S."/>
            <person name="Kanamori-Katayama M."/>
            <person name="Suzuki M."/>
            <person name="Aoki J."/>
            <person name="Arakawa T."/>
            <person name="Iida J."/>
            <person name="Imamura K."/>
            <person name="Itoh M."/>
            <person name="Kato T."/>
            <person name="Kawaji H."/>
            <person name="Kawagashira N."/>
            <person name="Kawashima T."/>
            <person name="Kojima M."/>
            <person name="Kondo S."/>
            <person name="Konno H."/>
            <person name="Nakano K."/>
            <person name="Ninomiya N."/>
            <person name="Nishio T."/>
            <person name="Okada M."/>
            <person name="Plessy C."/>
            <person name="Shibata K."/>
            <person name="Shiraki T."/>
            <person name="Suzuki S."/>
            <person name="Tagami M."/>
            <person name="Waki K."/>
            <person name="Watahiki A."/>
            <person name="Okamura-Oho Y."/>
            <person name="Suzuki H."/>
            <person name="Kawai J."/>
            <person name="Hayashizaki Y."/>
        </authorList>
    </citation>
    <scope>NUCLEOTIDE SEQUENCE [LARGE SCALE MRNA]</scope>
    <source>
        <strain>C57BL/6J</strain>
        <tissue>Thymus</tissue>
    </source>
</reference>
<reference key="2">
    <citation type="journal article" date="2004" name="Genome Res.">
        <title>The status, quality, and expansion of the NIH full-length cDNA project: the Mammalian Gene Collection (MGC).</title>
        <authorList>
            <consortium name="The MGC Project Team"/>
        </authorList>
    </citation>
    <scope>NUCLEOTIDE SEQUENCE [LARGE SCALE MRNA]</scope>
    <source>
        <strain>FVB/N</strain>
        <tissue>Mammary tumor</tissue>
    </source>
</reference>
<reference key="3">
    <citation type="submission" date="2009-01" db="UniProtKB">
        <authorList>
            <person name="Lubec G."/>
            <person name="Sunyer B."/>
            <person name="Chen W.-Q."/>
        </authorList>
    </citation>
    <scope>PROTEIN SEQUENCE OF 1058-1068</scope>
    <scope>IDENTIFICATION BY MASS SPECTROMETRY</scope>
    <source>
        <strain>OF1</strain>
        <tissue>Hippocampus</tissue>
    </source>
</reference>